<accession>O26782</accession>
<protein>
    <recommendedName>
        <fullName evidence="1">Proteasome subunit alpha</fullName>
    </recommendedName>
    <alternativeName>
        <fullName evidence="1">20S proteasome alpha subunit</fullName>
    </alternativeName>
    <alternativeName>
        <fullName evidence="1">Proteasome core protein PsmA</fullName>
    </alternativeName>
</protein>
<sequence length="248" mass="27526">MQPLQSAGYDRAITVFSPDGRLFQVEYAREAVKRGTTSLGVKSKEGIVLVVDKRPTSKLVEPKSIEKIFQIDEHIGAATSGLVADARAIIEKARLEAQINRITYNEPIRVESLAKKICDMKQMYTQHGGVRPFGTALIIGGVNGRGCRLFETDPSGALIEYKATAIGAGRPAAMEEFEKKYSDDMNLNQAIELALDAVYEATEGKTTPESVEIAVIEAADKKYRRLPDDEIRDHVEELLIRKEKEEEE</sequence>
<name>PSA_METTH</name>
<organism>
    <name type="scientific">Methanothermobacter thermautotrophicus (strain ATCC 29096 / DSM 1053 / JCM 10044 / NBRC 100330 / Delta H)</name>
    <name type="common">Methanobacterium thermoautotrophicum</name>
    <dbReference type="NCBI Taxonomy" id="187420"/>
    <lineage>
        <taxon>Archaea</taxon>
        <taxon>Methanobacteriati</taxon>
        <taxon>Methanobacteriota</taxon>
        <taxon>Methanomada group</taxon>
        <taxon>Methanobacteria</taxon>
        <taxon>Methanobacteriales</taxon>
        <taxon>Methanobacteriaceae</taxon>
        <taxon>Methanothermobacter</taxon>
    </lineage>
</organism>
<gene>
    <name evidence="1" type="primary">psmA</name>
    <name type="ordered locus">MTH_686</name>
</gene>
<keyword id="KW-0963">Cytoplasm</keyword>
<keyword id="KW-0647">Proteasome</keyword>
<keyword id="KW-1185">Reference proteome</keyword>
<reference key="1">
    <citation type="journal article" date="1997" name="J. Bacteriol.">
        <title>Complete genome sequence of Methanobacterium thermoautotrophicum deltaH: functional analysis and comparative genomics.</title>
        <authorList>
            <person name="Smith D.R."/>
            <person name="Doucette-Stamm L.A."/>
            <person name="Deloughery C."/>
            <person name="Lee H.-M."/>
            <person name="Dubois J."/>
            <person name="Aldredge T."/>
            <person name="Bashirzadeh R."/>
            <person name="Blakely D."/>
            <person name="Cook R."/>
            <person name="Gilbert K."/>
            <person name="Harrison D."/>
            <person name="Hoang L."/>
            <person name="Keagle P."/>
            <person name="Lumm W."/>
            <person name="Pothier B."/>
            <person name="Qiu D."/>
            <person name="Spadafora R."/>
            <person name="Vicare R."/>
            <person name="Wang Y."/>
            <person name="Wierzbowski J."/>
            <person name="Gibson R."/>
            <person name="Jiwani N."/>
            <person name="Caruso A."/>
            <person name="Bush D."/>
            <person name="Safer H."/>
            <person name="Patwell D."/>
            <person name="Prabhakar S."/>
            <person name="McDougall S."/>
            <person name="Shimer G."/>
            <person name="Goyal A."/>
            <person name="Pietrovski S."/>
            <person name="Church G.M."/>
            <person name="Daniels C.J."/>
            <person name="Mao J.-I."/>
            <person name="Rice P."/>
            <person name="Noelling J."/>
            <person name="Reeve J.N."/>
        </authorList>
    </citation>
    <scope>NUCLEOTIDE SEQUENCE [LARGE SCALE GENOMIC DNA]</scope>
    <source>
        <strain>ATCC 29096 / DSM 1053 / JCM 10044 / NBRC 100330 / Delta H</strain>
    </source>
</reference>
<comment type="function">
    <text evidence="1">Component of the proteasome core, a large protease complex with broad specificity involved in protein degradation.</text>
</comment>
<comment type="activity regulation">
    <text evidence="1">The formation of the proteasomal ATPase PAN-20S proteasome complex, via the docking of the C-termini of PAN into the intersubunit pockets in the alpha-rings, triggers opening of the gate for substrate entry. Interconversion between the open-gate and close-gate conformations leads to a dynamic regulation of the 20S proteasome proteolysis activity.</text>
</comment>
<comment type="subunit">
    <text evidence="1">The 20S proteasome core is composed of 14 alpha and 14 beta subunits that assemble into four stacked heptameric rings, resulting in a barrel-shaped structure. The two inner rings, each composed of seven catalytic beta subunits, are sandwiched by two outer rings, each composed of seven alpha subunits. The catalytic chamber with the active sites is on the inside of the barrel. Has a gated structure, the ends of the cylinder being occluded by the N-termini of the alpha-subunits. Is capped at one or both ends by the proteasome regulatory ATPase, PAN.</text>
</comment>
<comment type="subcellular location">
    <subcellularLocation>
        <location evidence="1">Cytoplasm</location>
    </subcellularLocation>
</comment>
<comment type="similarity">
    <text evidence="1">Belongs to the peptidase T1A family.</text>
</comment>
<feature type="chain" id="PRO_0000124179" description="Proteasome subunit alpha">
    <location>
        <begin position="1"/>
        <end position="248"/>
    </location>
</feature>
<evidence type="ECO:0000255" key="1">
    <source>
        <dbReference type="HAMAP-Rule" id="MF_00289"/>
    </source>
</evidence>
<dbReference type="EMBL" id="AE000666">
    <property type="protein sequence ID" value="AAB85191.1"/>
    <property type="molecule type" value="Genomic_DNA"/>
</dbReference>
<dbReference type="PIR" id="D69191">
    <property type="entry name" value="D69191"/>
</dbReference>
<dbReference type="RefSeq" id="WP_010876325.1">
    <property type="nucleotide sequence ID" value="NC_000916.1"/>
</dbReference>
<dbReference type="SMR" id="O26782"/>
<dbReference type="FunCoup" id="O26782">
    <property type="interactions" value="116"/>
</dbReference>
<dbReference type="IntAct" id="O26782">
    <property type="interactions" value="1"/>
</dbReference>
<dbReference type="STRING" id="187420.MTH_686"/>
<dbReference type="PaxDb" id="187420-MTH_686"/>
<dbReference type="EnsemblBacteria" id="AAB85191">
    <property type="protein sequence ID" value="AAB85191"/>
    <property type="gene ID" value="MTH_686"/>
</dbReference>
<dbReference type="GeneID" id="82297145"/>
<dbReference type="KEGG" id="mth:MTH_686"/>
<dbReference type="PATRIC" id="fig|187420.15.peg.667"/>
<dbReference type="HOGENOM" id="CLU_035750_4_1_2"/>
<dbReference type="InParanoid" id="O26782"/>
<dbReference type="Proteomes" id="UP000005223">
    <property type="component" value="Chromosome"/>
</dbReference>
<dbReference type="GO" id="GO:0005737">
    <property type="term" value="C:cytoplasm"/>
    <property type="evidence" value="ECO:0007669"/>
    <property type="project" value="UniProtKB-SubCell"/>
</dbReference>
<dbReference type="GO" id="GO:0019773">
    <property type="term" value="C:proteasome core complex, alpha-subunit complex"/>
    <property type="evidence" value="ECO:0000250"/>
    <property type="project" value="UniProtKB"/>
</dbReference>
<dbReference type="GO" id="GO:0004298">
    <property type="term" value="F:threonine-type endopeptidase activity"/>
    <property type="evidence" value="ECO:0007669"/>
    <property type="project" value="InterPro"/>
</dbReference>
<dbReference type="GO" id="GO:0010498">
    <property type="term" value="P:proteasomal protein catabolic process"/>
    <property type="evidence" value="ECO:0007669"/>
    <property type="project" value="UniProtKB-UniRule"/>
</dbReference>
<dbReference type="GO" id="GO:0006511">
    <property type="term" value="P:ubiquitin-dependent protein catabolic process"/>
    <property type="evidence" value="ECO:0007669"/>
    <property type="project" value="InterPro"/>
</dbReference>
<dbReference type="CDD" id="cd03756">
    <property type="entry name" value="proteasome_alpha_archeal"/>
    <property type="match status" value="1"/>
</dbReference>
<dbReference type="FunFam" id="3.60.20.10:FF:000004">
    <property type="entry name" value="Proteasome subunit alpha type-4"/>
    <property type="match status" value="1"/>
</dbReference>
<dbReference type="Gene3D" id="3.60.20.10">
    <property type="entry name" value="Glutamine Phosphoribosylpyrophosphate, subunit 1, domain 1"/>
    <property type="match status" value="1"/>
</dbReference>
<dbReference type="HAMAP" id="MF_00289_A">
    <property type="entry name" value="Proteasome_A_A"/>
    <property type="match status" value="1"/>
</dbReference>
<dbReference type="InterPro" id="IPR029055">
    <property type="entry name" value="Ntn_hydrolases_N"/>
</dbReference>
<dbReference type="InterPro" id="IPR050115">
    <property type="entry name" value="Proteasome_alpha"/>
</dbReference>
<dbReference type="InterPro" id="IPR023332">
    <property type="entry name" value="Proteasome_alpha-type"/>
</dbReference>
<dbReference type="InterPro" id="IPR019982">
    <property type="entry name" value="Proteasome_asu_arc"/>
</dbReference>
<dbReference type="InterPro" id="IPR000426">
    <property type="entry name" value="Proteasome_asu_N"/>
</dbReference>
<dbReference type="InterPro" id="IPR001353">
    <property type="entry name" value="Proteasome_sua/b"/>
</dbReference>
<dbReference type="NCBIfam" id="TIGR03633">
    <property type="entry name" value="arc_protsome_A"/>
    <property type="match status" value="1"/>
</dbReference>
<dbReference type="NCBIfam" id="NF003075">
    <property type="entry name" value="PRK03996.1"/>
    <property type="match status" value="1"/>
</dbReference>
<dbReference type="PANTHER" id="PTHR11599">
    <property type="entry name" value="PROTEASOME SUBUNIT ALPHA/BETA"/>
    <property type="match status" value="1"/>
</dbReference>
<dbReference type="Pfam" id="PF00227">
    <property type="entry name" value="Proteasome"/>
    <property type="match status" value="1"/>
</dbReference>
<dbReference type="Pfam" id="PF10584">
    <property type="entry name" value="Proteasome_A_N"/>
    <property type="match status" value="1"/>
</dbReference>
<dbReference type="SMART" id="SM00948">
    <property type="entry name" value="Proteasome_A_N"/>
    <property type="match status" value="1"/>
</dbReference>
<dbReference type="SUPFAM" id="SSF56235">
    <property type="entry name" value="N-terminal nucleophile aminohydrolases (Ntn hydrolases)"/>
    <property type="match status" value="1"/>
</dbReference>
<dbReference type="PROSITE" id="PS00388">
    <property type="entry name" value="PROTEASOME_ALPHA_1"/>
    <property type="match status" value="1"/>
</dbReference>
<dbReference type="PROSITE" id="PS51475">
    <property type="entry name" value="PROTEASOME_ALPHA_2"/>
    <property type="match status" value="1"/>
</dbReference>
<proteinExistence type="inferred from homology"/>